<comment type="function">
    <text>Involved in calcium regulation of yop expression, which includes the export process.</text>
</comment>
<comment type="subcellular location">
    <subcellularLocation>
        <location>Secreted</location>
    </subcellularLocation>
</comment>
<geneLocation type="plasmid">
    <name>pIB1</name>
</geneLocation>
<geneLocation type="plasmid">
    <name>pYV</name>
</geneLocation>
<proteinExistence type="predicted"/>
<name>LCRV_YERPS</name>
<gene>
    <name type="primary">lcrV</name>
    <name type="ordered locus">pYV0057</name>
</gene>
<dbReference type="EMBL" id="M57893">
    <property type="protein sequence ID" value="AAA27645.1"/>
    <property type="molecule type" value="Genomic_DNA"/>
</dbReference>
<dbReference type="EMBL" id="X96802">
    <property type="protein sequence ID" value="CAA65594.1"/>
    <property type="molecule type" value="Genomic_DNA"/>
</dbReference>
<dbReference type="EMBL" id="BX936399">
    <property type="protein sequence ID" value="CAF25400.1"/>
    <property type="molecule type" value="Genomic_DNA"/>
</dbReference>
<dbReference type="PIR" id="B37314">
    <property type="entry name" value="B37314"/>
</dbReference>
<dbReference type="RefSeq" id="WP_011191383.1">
    <property type="nucleotide sequence ID" value="NC_006153.2"/>
</dbReference>
<dbReference type="SMR" id="P23994"/>
<dbReference type="KEGG" id="ypo:BZ17_4276"/>
<dbReference type="KEGG" id="yps:pYV0057"/>
<dbReference type="PATRIC" id="fig|273123.14.peg.4512"/>
<dbReference type="PHI-base" id="PHI:9108"/>
<dbReference type="Proteomes" id="UP000001011">
    <property type="component" value="Plasmid pYV"/>
</dbReference>
<dbReference type="GO" id="GO:0005576">
    <property type="term" value="C:extracellular region"/>
    <property type="evidence" value="ECO:0007669"/>
    <property type="project" value="UniProtKB-SubCell"/>
</dbReference>
<dbReference type="InterPro" id="IPR005413">
    <property type="entry name" value="LowCa_resp_V_Ag"/>
</dbReference>
<dbReference type="InterPro" id="IPR036139">
    <property type="entry name" value="Vir_assoc_V_ag_sf"/>
</dbReference>
<dbReference type="Pfam" id="PF04792">
    <property type="entry name" value="LcrV"/>
    <property type="match status" value="1"/>
</dbReference>
<dbReference type="PRINTS" id="PR01592">
    <property type="entry name" value="LCRVANTIGEN"/>
</dbReference>
<dbReference type="SUPFAM" id="SSF103388">
    <property type="entry name" value="Virulence-associated V antigen"/>
    <property type="match status" value="1"/>
</dbReference>
<protein>
    <recommendedName>
        <fullName>Virulence-associated V antigen</fullName>
    </recommendedName>
    <alternativeName>
        <fullName>Low calcium response locus protein V</fullName>
    </alternativeName>
</protein>
<sequence>MIRAYEQNPQHFIEDLEKVRVEQLTGHGSSVLEELVQLVKDKNIDISIKYDPRKDSEVFANRVITDDIELLKKILAYFLPEDAILKGGHYDNQLQNGIKRVKEFLESSPNTQWELRAFMAVIHFSLTADRIDDDILKVIVDSMNHHGDARSKLREELAELTAELKIYSVIQAEINKHLSSGGTINIHDKSINLMDKNLYGYTDEEIFKASAEYKILEKMPQTTIQEGETEKKIVSIKNFLESEKKRTGALGNLKDSYSYNKDNNELSHFATTCSDKSRPLNDLVSQKTTQLSDITSRFNSAIEALNRFIQKYDSVMQRLLDDTSGK</sequence>
<keyword id="KW-0614">Plasmid</keyword>
<keyword id="KW-0964">Secreted</keyword>
<keyword id="KW-0843">Virulence</keyword>
<feature type="chain" id="PRO_0000084381" description="Virulence-associated V antigen">
    <location>
        <begin position="1"/>
        <end position="326"/>
    </location>
</feature>
<reference key="1">
    <citation type="journal article" date="1991" name="J. Bacteriol.">
        <title>Analysis of the V antigen lcrGVH-yopBD operon of Yersinia pseudotuberculosis: evidence for a regulatory role of LcrH and LcrV.</title>
        <authorList>
            <person name="Bergman T."/>
            <person name="Haakansson S."/>
            <person name="Forsberg A."/>
            <person name="Norlander L."/>
            <person name="Macellaro A."/>
            <person name="Baeckman A."/>
            <person name="Boelin I."/>
            <person name="Wolf-Watz H."/>
        </authorList>
    </citation>
    <scope>NUCLEOTIDE SEQUENCE [GENOMIC DNA]</scope>
    <source>
        <strain>YPIII / Serotype O:3</strain>
        <plasmid>pIB1</plasmid>
    </source>
</reference>
<reference key="2">
    <citation type="journal article" date="1997" name="Infect. Immun.">
        <title>Passive immunity to infection with Yersinia spp. mediated by anti-recombinant V antigen is dependent on polymorphism of V antigen.</title>
        <authorList>
            <person name="Roggenkamp A."/>
            <person name="Geiger A.M."/>
            <person name="Leitritz L."/>
            <person name="Kessler A."/>
            <person name="Heesemann J."/>
        </authorList>
    </citation>
    <scope>NUCLEOTIDE SEQUENCE [GENOMIC DNA]</scope>
    <source>
        <strain>Serotype IA</strain>
        <plasmid>pYV</plasmid>
    </source>
</reference>
<reference key="3">
    <citation type="journal article" date="2004" name="Proc. Natl. Acad. Sci. U.S.A.">
        <title>Insights into the evolution of Yersinia pestis through whole-genome comparison with Yersinia pseudotuberculosis.</title>
        <authorList>
            <person name="Chain P.S.G."/>
            <person name="Carniel E."/>
            <person name="Larimer F.W."/>
            <person name="Lamerdin J."/>
            <person name="Stoutland P.O."/>
            <person name="Regala W.M."/>
            <person name="Georgescu A.M."/>
            <person name="Vergez L.M."/>
            <person name="Land M.L."/>
            <person name="Motin V.L."/>
            <person name="Brubaker R.R."/>
            <person name="Fowler J."/>
            <person name="Hinnebusch J."/>
            <person name="Marceau M."/>
            <person name="Medigue C."/>
            <person name="Simonet M."/>
            <person name="Chenal-Francisque V."/>
            <person name="Souza B."/>
            <person name="Dacheux D."/>
            <person name="Elliott J.M."/>
            <person name="Derbise A."/>
            <person name="Hauser L.J."/>
            <person name="Garcia E."/>
        </authorList>
    </citation>
    <scope>NUCLEOTIDE SEQUENCE [LARGE SCALE GENOMIC DNA]</scope>
    <source>
        <strain>IP32953</strain>
        <plasmid>pYV</plasmid>
    </source>
</reference>
<accession>P23994</accession>
<accession>Q663K9</accession>
<organism>
    <name type="scientific">Yersinia pseudotuberculosis serotype I (strain IP32953)</name>
    <dbReference type="NCBI Taxonomy" id="273123"/>
    <lineage>
        <taxon>Bacteria</taxon>
        <taxon>Pseudomonadati</taxon>
        <taxon>Pseudomonadota</taxon>
        <taxon>Gammaproteobacteria</taxon>
        <taxon>Enterobacterales</taxon>
        <taxon>Yersiniaceae</taxon>
        <taxon>Yersinia</taxon>
    </lineage>
</organism>